<name>UCP1_CANLF</name>
<organism>
    <name type="scientific">Canis lupus familiaris</name>
    <name type="common">Dog</name>
    <name type="synonym">Canis familiaris</name>
    <dbReference type="NCBI Taxonomy" id="9615"/>
    <lineage>
        <taxon>Eukaryota</taxon>
        <taxon>Metazoa</taxon>
        <taxon>Chordata</taxon>
        <taxon>Craniata</taxon>
        <taxon>Vertebrata</taxon>
        <taxon>Euteleostomi</taxon>
        <taxon>Mammalia</taxon>
        <taxon>Eutheria</taxon>
        <taxon>Laurasiatheria</taxon>
        <taxon>Carnivora</taxon>
        <taxon>Caniformia</taxon>
        <taxon>Canidae</taxon>
        <taxon>Canis</taxon>
    </lineage>
</organism>
<dbReference type="EMBL" id="AB046106">
    <property type="protein sequence ID" value="BAB11684.1"/>
    <property type="molecule type" value="mRNA"/>
</dbReference>
<dbReference type="RefSeq" id="NP_001003046.1">
    <property type="nucleotide sequence ID" value="NM_001003046.1"/>
</dbReference>
<dbReference type="SMR" id="Q9GMZ1"/>
<dbReference type="FunCoup" id="Q9GMZ1">
    <property type="interactions" value="32"/>
</dbReference>
<dbReference type="STRING" id="9615.ENSCAFP00000005489"/>
<dbReference type="PaxDb" id="9612-ENSCAFP00000005489"/>
<dbReference type="GeneID" id="403574"/>
<dbReference type="KEGG" id="cfa:403574"/>
<dbReference type="CTD" id="7350"/>
<dbReference type="eggNOG" id="KOG0753">
    <property type="taxonomic scope" value="Eukaryota"/>
</dbReference>
<dbReference type="InParanoid" id="Q9GMZ1"/>
<dbReference type="OrthoDB" id="5002at33554"/>
<dbReference type="Proteomes" id="UP000002254">
    <property type="component" value="Unplaced"/>
</dbReference>
<dbReference type="Proteomes" id="UP000694429">
    <property type="component" value="Unplaced"/>
</dbReference>
<dbReference type="Proteomes" id="UP000694542">
    <property type="component" value="Unplaced"/>
</dbReference>
<dbReference type="Proteomes" id="UP000805418">
    <property type="component" value="Unplaced"/>
</dbReference>
<dbReference type="GO" id="GO:0005743">
    <property type="term" value="C:mitochondrial inner membrane"/>
    <property type="evidence" value="ECO:0000250"/>
    <property type="project" value="UniProtKB"/>
</dbReference>
<dbReference type="GO" id="GO:1901612">
    <property type="term" value="F:cardiolipin binding"/>
    <property type="evidence" value="ECO:0000250"/>
    <property type="project" value="UniProtKB"/>
</dbReference>
<dbReference type="GO" id="GO:0036041">
    <property type="term" value="F:long-chain fatty acid binding"/>
    <property type="evidence" value="ECO:0000250"/>
    <property type="project" value="UniProtKB"/>
</dbReference>
<dbReference type="GO" id="GO:0017077">
    <property type="term" value="F:oxidative phosphorylation uncoupler activity"/>
    <property type="evidence" value="ECO:0000250"/>
    <property type="project" value="UniProtKB"/>
</dbReference>
<dbReference type="GO" id="GO:0032555">
    <property type="term" value="F:purine ribonucleotide binding"/>
    <property type="evidence" value="ECO:0000250"/>
    <property type="project" value="UniProtKB"/>
</dbReference>
<dbReference type="GO" id="GO:1990845">
    <property type="term" value="P:adaptive thermogenesis"/>
    <property type="evidence" value="ECO:0000250"/>
    <property type="project" value="UniProtKB"/>
</dbReference>
<dbReference type="GO" id="GO:0071398">
    <property type="term" value="P:cellular response to fatty acid"/>
    <property type="evidence" value="ECO:0000250"/>
    <property type="project" value="UniProtKB"/>
</dbReference>
<dbReference type="GO" id="GO:0032870">
    <property type="term" value="P:cellular response to hormone stimulus"/>
    <property type="evidence" value="ECO:0000250"/>
    <property type="project" value="UniProtKB"/>
</dbReference>
<dbReference type="GO" id="GO:0034614">
    <property type="term" value="P:cellular response to reactive oxygen species"/>
    <property type="evidence" value="ECO:0000250"/>
    <property type="project" value="UniProtKB"/>
</dbReference>
<dbReference type="GO" id="GO:1990542">
    <property type="term" value="P:mitochondrial transmembrane transport"/>
    <property type="evidence" value="ECO:0000250"/>
    <property type="project" value="UniProtKB"/>
</dbReference>
<dbReference type="GO" id="GO:1902600">
    <property type="term" value="P:proton transmembrane transport"/>
    <property type="evidence" value="ECO:0000250"/>
    <property type="project" value="UniProtKB"/>
</dbReference>
<dbReference type="GO" id="GO:1903426">
    <property type="term" value="P:regulation of reactive oxygen species biosynthetic process"/>
    <property type="evidence" value="ECO:0000250"/>
    <property type="project" value="UniProtKB"/>
</dbReference>
<dbReference type="GO" id="GO:0009409">
    <property type="term" value="P:response to cold"/>
    <property type="evidence" value="ECO:0000318"/>
    <property type="project" value="GO_Central"/>
</dbReference>
<dbReference type="GO" id="GO:0031667">
    <property type="term" value="P:response to nutrient levels"/>
    <property type="evidence" value="ECO:0000250"/>
    <property type="project" value="UniProtKB"/>
</dbReference>
<dbReference type="GO" id="GO:0009266">
    <property type="term" value="P:response to temperature stimulus"/>
    <property type="evidence" value="ECO:0000250"/>
    <property type="project" value="UniProtKB"/>
</dbReference>
<dbReference type="FunFam" id="1.50.40.10:FF:000068">
    <property type="entry name" value="Mitochondrial brown fat uncoupling protein 1"/>
    <property type="match status" value="1"/>
</dbReference>
<dbReference type="Gene3D" id="1.50.40.10">
    <property type="entry name" value="Mitochondrial carrier domain"/>
    <property type="match status" value="1"/>
</dbReference>
<dbReference type="InterPro" id="IPR002067">
    <property type="entry name" value="Mit_carrier"/>
</dbReference>
<dbReference type="InterPro" id="IPR050391">
    <property type="entry name" value="Mito_Metabolite_Transporter"/>
</dbReference>
<dbReference type="InterPro" id="IPR018108">
    <property type="entry name" value="Mitochondrial_sb/sol_carrier"/>
</dbReference>
<dbReference type="InterPro" id="IPR023395">
    <property type="entry name" value="Mt_carrier_dom_sf"/>
</dbReference>
<dbReference type="PANTHER" id="PTHR45618">
    <property type="entry name" value="MITOCHONDRIAL DICARBOXYLATE CARRIER-RELATED"/>
    <property type="match status" value="1"/>
</dbReference>
<dbReference type="Pfam" id="PF00153">
    <property type="entry name" value="Mito_carr"/>
    <property type="match status" value="3"/>
</dbReference>
<dbReference type="PRINTS" id="PR00784">
    <property type="entry name" value="MTUNCOUPLING"/>
</dbReference>
<dbReference type="SUPFAM" id="SSF103506">
    <property type="entry name" value="Mitochondrial carrier"/>
    <property type="match status" value="1"/>
</dbReference>
<dbReference type="PROSITE" id="PS50920">
    <property type="entry name" value="SOLCAR"/>
    <property type="match status" value="3"/>
</dbReference>
<protein>
    <recommendedName>
        <fullName evidence="8">Mitochondrial brown fat uncoupling protein 1</fullName>
        <shortName evidence="8">UCP 1</shortName>
    </recommendedName>
    <alternativeName>
        <fullName evidence="4">Solute carrier family 25 member 7</fullName>
    </alternativeName>
    <alternativeName>
        <fullName evidence="1">Thermogenin</fullName>
    </alternativeName>
</protein>
<accession>Q9GMZ1</accession>
<sequence>MLRAPGSDAPPTLSVRIAAAAGAACLADMITFPLDTAKVRLQIQGEGQGQPPRAPRYRGVLGTVATLARTEGLQKLYSGLPAGLQRQVGFASLRIGLYDSVREWLSPGQGAAASLGSRISAGVMTGGAAVFIGQPTEVVKVRLQAQSHLHGRKPRYTGTYNAYRIIATTEGLTGLWKGTTPNLMRNVIINCTELVTYDLMKEALVKNHLLADDLPCHFLSALVAGFCTTVLSSPVDVVKTRFVNSVPEQYTSVPNCAMTMLTKEGPLAFFKGFVPSFLRLGSWNVIMFVCFEQLKRELMKSGRTVDCAT</sequence>
<evidence type="ECO:0000250" key="1">
    <source>
        <dbReference type="UniProtKB" id="P04575"/>
    </source>
</evidence>
<evidence type="ECO:0000250" key="2">
    <source>
        <dbReference type="UniProtKB" id="P04633"/>
    </source>
</evidence>
<evidence type="ECO:0000250" key="3">
    <source>
        <dbReference type="UniProtKB" id="P12242"/>
    </source>
</evidence>
<evidence type="ECO:0000250" key="4">
    <source>
        <dbReference type="UniProtKB" id="P25874"/>
    </source>
</evidence>
<evidence type="ECO:0000250" key="5">
    <source>
        <dbReference type="UniProtKB" id="W5PSH7"/>
    </source>
</evidence>
<evidence type="ECO:0000255" key="6"/>
<evidence type="ECO:0000303" key="7">
    <source>
    </source>
</evidence>
<evidence type="ECO:0000305" key="8"/>
<proteinExistence type="evidence at transcript level"/>
<feature type="chain" id="PRO_0000090655" description="Mitochondrial brown fat uncoupling protein 1">
    <location>
        <begin position="1"/>
        <end position="309"/>
    </location>
</feature>
<feature type="topological domain" description="Mitochondrial intermembrane" evidence="2">
    <location>
        <begin position="1"/>
        <end position="10"/>
    </location>
</feature>
<feature type="transmembrane region" description="Helical; Name=1" evidence="6">
    <location>
        <begin position="11"/>
        <end position="32"/>
    </location>
</feature>
<feature type="topological domain" description="Mitochondrial matrix" evidence="2">
    <location>
        <begin position="33"/>
        <end position="75"/>
    </location>
</feature>
<feature type="transmembrane region" description="Helical; Name=2" evidence="6">
    <location>
        <begin position="76"/>
        <end position="98"/>
    </location>
</feature>
<feature type="topological domain" description="Mitochondrial intermembrane" evidence="2">
    <location>
        <begin position="99"/>
        <end position="118"/>
    </location>
</feature>
<feature type="transmembrane region" description="Helical; Name=3" evidence="6">
    <location>
        <begin position="119"/>
        <end position="135"/>
    </location>
</feature>
<feature type="topological domain" description="Mitochondrial matrix" evidence="2">
    <location>
        <begin position="136"/>
        <end position="180"/>
    </location>
</feature>
<feature type="transmembrane region" description="Helical; Name=4" evidence="6">
    <location>
        <begin position="181"/>
        <end position="197"/>
    </location>
</feature>
<feature type="topological domain" description="Mitochondrial intermembrane" evidence="2">
    <location>
        <begin position="198"/>
        <end position="214"/>
    </location>
</feature>
<feature type="transmembrane region" description="Helical; Name=5" evidence="6">
    <location>
        <begin position="215"/>
        <end position="234"/>
    </location>
</feature>
<feature type="topological domain" description="Mitochondrial matrix" evidence="2">
    <location>
        <begin position="235"/>
        <end position="268"/>
    </location>
</feature>
<feature type="transmembrane region" description="Helical; Name=6" evidence="6">
    <location>
        <begin position="269"/>
        <end position="291"/>
    </location>
</feature>
<feature type="topological domain" description="Mitochondrial intermembrane" evidence="2">
    <location>
        <begin position="292"/>
        <end position="309"/>
    </location>
</feature>
<feature type="repeat" description="Solcar 1">
    <location>
        <begin position="11"/>
        <end position="104"/>
    </location>
</feature>
<feature type="repeat" description="Solcar 2">
    <location>
        <begin position="113"/>
        <end position="203"/>
    </location>
</feature>
<feature type="repeat" description="Solcar 3">
    <location>
        <begin position="212"/>
        <end position="297"/>
    </location>
</feature>
<feature type="binding site" evidence="4">
    <location>
        <position position="58"/>
    </location>
    <ligand>
        <name>fatty acid 16:0</name>
        <dbReference type="ChEBI" id="CHEBI:78123"/>
    </ligand>
</feature>
<feature type="binding site" evidence="4">
    <location>
        <position position="271"/>
    </location>
    <ligand>
        <name>fatty acid 16:0</name>
        <dbReference type="ChEBI" id="CHEBI:78123"/>
    </ligand>
</feature>
<feature type="modified residue" description="Cysteine sulfenic acid (-SOH)" evidence="3">
    <location>
        <position position="256"/>
    </location>
</feature>
<reference key="1">
    <citation type="journal article" date="2002" name="Comp. Biochem. Physiol.">
        <title>Canine mitochondrial uncoupling proteins: structure and mRNA expression of three isoforms in adult beagles.</title>
        <authorList>
            <person name="Ishioka K."/>
            <person name="Kanehira K."/>
            <person name="Sasaki N."/>
            <person name="Kitamura H."/>
            <person name="Kimura K."/>
            <person name="Saito M."/>
        </authorList>
    </citation>
    <scope>NUCLEOTIDE SEQUENCE [MRNA]</scope>
    <source>
        <strain>Beagle</strain>
    </source>
</reference>
<gene>
    <name evidence="7" type="primary">UCP1</name>
    <name evidence="4" type="synonym">SLC25A7</name>
</gene>
<comment type="function">
    <text evidence="3">Mitochondrial protein responsible for thermogenic respiration, a specialized capacity of brown adipose tissue and beige fat that participates in non-shivering adaptive thermogenesis to temperature and diet variations and more generally to the regulation of energy balance. Functions as a long-chain fatty acid/LCFA and proton symporter, simultaneously transporting one LCFA and one proton through the inner mitochondrial membrane. However, LCFAs remaining associated with the transporter via their hydrophobic tails, it results in an apparent transport of protons activated by LCFAs. Thereby, dissipates the mitochondrial proton gradient and converts the energy of substrate oxydation into heat instead of ATP. Regulates the production of reactive oxygen species/ROS by mitochondria.</text>
</comment>
<comment type="catalytic activity">
    <reaction evidence="4">
        <text>H(+)(in) = H(+)(out)</text>
        <dbReference type="Rhea" id="RHEA:34979"/>
        <dbReference type="ChEBI" id="CHEBI:15378"/>
    </reaction>
</comment>
<comment type="activity regulation">
    <text evidence="3">Has no constitutive proton transporter activity and has to be activated by long-chain fatty acids/LCFAs. Inhibited by purine nucleotides. Both purine nucleotides and LCFAs bind the cytosolic side of the transporter and directly compete to activate or inhibit it. Activated by noradrenaline and reactive oxygen species. Despite lacking canonical translational encoding for selenocysteine, a small pool of the protein has been observed to selectively incorporate selenocysteine at 'Cys-256'. Selenocysteine-modified protein is highly sensitive to redox modification and may constitute a pool of protein highly sensitive to activation by elevated levels of reactive oxygen species (ROS).</text>
</comment>
<comment type="subunit">
    <text evidence="4 5">Most probably functions as a monomer. Binds one purine nucleotide per monomer. However, has also been suggested to function as a homodimer or a homotetramer. Tightly associates with cardiolipin in the mitochondrion inner membrane; may stabilize and regulate its activity.</text>
</comment>
<comment type="subcellular location">
    <subcellularLocation>
        <location evidence="3">Mitochondrion inner membrane</location>
        <topology evidence="2">Multi-pass membrane protein</topology>
    </subcellularLocation>
</comment>
<comment type="PTM">
    <text evidence="3">May undergo sulfenylation upon cold exposure. May increase the sensitivity of UCP1 thermogenic function to the activation by noradrenaline probably through structural effects.</text>
</comment>
<comment type="PTM">
    <text evidence="2">May undergo ubiquitin-mediated proteasomal degradation.</text>
</comment>
<comment type="similarity">
    <text evidence="8">Belongs to the mitochondrial carrier (TC 2.A.29) family.</text>
</comment>
<keyword id="KW-0407">Ion channel</keyword>
<keyword id="KW-0406">Ion transport</keyword>
<keyword id="KW-0472">Membrane</keyword>
<keyword id="KW-0496">Mitochondrion</keyword>
<keyword id="KW-0999">Mitochondrion inner membrane</keyword>
<keyword id="KW-0558">Oxidation</keyword>
<keyword id="KW-1185">Reference proteome</keyword>
<keyword id="KW-0677">Repeat</keyword>
<keyword id="KW-0812">Transmembrane</keyword>
<keyword id="KW-1133">Transmembrane helix</keyword>
<keyword id="KW-0813">Transport</keyword>